<feature type="chain" id="PRO_1000139874" description="Glycogen debranching enzyme">
    <location>
        <begin position="1"/>
        <end position="658"/>
    </location>
</feature>
<feature type="region of interest" description="Disordered" evidence="2">
    <location>
        <begin position="459"/>
        <end position="484"/>
    </location>
</feature>
<feature type="active site" description="Nucleophile" evidence="1">
    <location>
        <position position="336"/>
    </location>
</feature>
<feature type="active site" description="Proton donor" evidence="1">
    <location>
        <position position="371"/>
    </location>
</feature>
<feature type="site" description="Transition state stabilizer" evidence="1">
    <location>
        <position position="443"/>
    </location>
</feature>
<protein>
    <recommendedName>
        <fullName evidence="1">Glycogen debranching enzyme</fullName>
        <ecNumber evidence="1">3.2.1.196</ecNumber>
    </recommendedName>
    <alternativeName>
        <fullName evidence="1">Limit dextrin alpha-1,6-maltotetraose-hydrolase</fullName>
    </alternativeName>
</protein>
<comment type="function">
    <text evidence="1">Removes maltotriose and maltotetraose chains that are attached by 1,6-alpha-linkage to the limit dextrin main chain, generating a debranched limit dextrin.</text>
</comment>
<comment type="catalytic activity">
    <reaction evidence="1">
        <text>Hydrolysis of (1-&gt;6)-alpha-D-glucosidic linkages to branches with degrees of polymerization of three or four glucose residues in limit dextrin.</text>
        <dbReference type="EC" id="3.2.1.196"/>
    </reaction>
</comment>
<comment type="pathway">
    <text evidence="1">Glycan degradation; glycogen degradation.</text>
</comment>
<comment type="similarity">
    <text evidence="1">Belongs to the glycosyl hydrolase 13 family.</text>
</comment>
<organism>
    <name type="scientific">Salmonella enteritidis PT4 (strain P125109)</name>
    <dbReference type="NCBI Taxonomy" id="550537"/>
    <lineage>
        <taxon>Bacteria</taxon>
        <taxon>Pseudomonadati</taxon>
        <taxon>Pseudomonadota</taxon>
        <taxon>Gammaproteobacteria</taxon>
        <taxon>Enterobacterales</taxon>
        <taxon>Enterobacteriaceae</taxon>
        <taxon>Salmonella</taxon>
    </lineage>
</organism>
<proteinExistence type="inferred from homology"/>
<dbReference type="EC" id="3.2.1.196" evidence="1"/>
<dbReference type="EMBL" id="AM933172">
    <property type="protein sequence ID" value="CAR34937.1"/>
    <property type="molecule type" value="Genomic_DNA"/>
</dbReference>
<dbReference type="RefSeq" id="WP_000192496.1">
    <property type="nucleotide sequence ID" value="NC_011294.1"/>
</dbReference>
<dbReference type="SMR" id="B5R396"/>
<dbReference type="CAZy" id="CBM48">
    <property type="family name" value="Carbohydrate-Binding Module Family 48"/>
</dbReference>
<dbReference type="CAZy" id="GH13">
    <property type="family name" value="Glycoside Hydrolase Family 13"/>
</dbReference>
<dbReference type="KEGG" id="set:SEN3361"/>
<dbReference type="HOGENOM" id="CLU_011725_1_1_6"/>
<dbReference type="UniPathway" id="UPA00165"/>
<dbReference type="Proteomes" id="UP000000613">
    <property type="component" value="Chromosome"/>
</dbReference>
<dbReference type="GO" id="GO:0004133">
    <property type="term" value="F:glycogen debranching enzyme activity"/>
    <property type="evidence" value="ECO:0007669"/>
    <property type="project" value="UniProtKB-UniRule"/>
</dbReference>
<dbReference type="GO" id="GO:0004553">
    <property type="term" value="F:hydrolase activity, hydrolyzing O-glycosyl compounds"/>
    <property type="evidence" value="ECO:0007669"/>
    <property type="project" value="InterPro"/>
</dbReference>
<dbReference type="GO" id="GO:0005980">
    <property type="term" value="P:glycogen catabolic process"/>
    <property type="evidence" value="ECO:0007669"/>
    <property type="project" value="UniProtKB-UniRule"/>
</dbReference>
<dbReference type="CDD" id="cd11326">
    <property type="entry name" value="AmyAc_Glg_debranch"/>
    <property type="match status" value="1"/>
</dbReference>
<dbReference type="CDD" id="cd02856">
    <property type="entry name" value="E_set_GDE_Isoamylase_N"/>
    <property type="match status" value="1"/>
</dbReference>
<dbReference type="FunFam" id="2.60.40.10:FF:000468">
    <property type="entry name" value="Glycogen debranching enzyme"/>
    <property type="match status" value="1"/>
</dbReference>
<dbReference type="Gene3D" id="3.20.20.80">
    <property type="entry name" value="Glycosidases"/>
    <property type="match status" value="1"/>
</dbReference>
<dbReference type="Gene3D" id="2.60.40.1180">
    <property type="entry name" value="Golgi alpha-mannosidase II"/>
    <property type="match status" value="1"/>
</dbReference>
<dbReference type="Gene3D" id="2.60.40.10">
    <property type="entry name" value="Immunoglobulins"/>
    <property type="match status" value="1"/>
</dbReference>
<dbReference type="HAMAP" id="MF_01248">
    <property type="entry name" value="GlgX"/>
    <property type="match status" value="1"/>
</dbReference>
<dbReference type="InterPro" id="IPR040784">
    <property type="entry name" value="GlgX_C"/>
</dbReference>
<dbReference type="InterPro" id="IPR044505">
    <property type="entry name" value="GlgX_Isoamylase_N_E_set"/>
</dbReference>
<dbReference type="InterPro" id="IPR006047">
    <property type="entry name" value="Glyco_hydro_13_cat_dom"/>
</dbReference>
<dbReference type="InterPro" id="IPR004193">
    <property type="entry name" value="Glyco_hydro_13_N"/>
</dbReference>
<dbReference type="InterPro" id="IPR013780">
    <property type="entry name" value="Glyco_hydro_b"/>
</dbReference>
<dbReference type="InterPro" id="IPR022844">
    <property type="entry name" value="Glycogen_debranch_bac"/>
</dbReference>
<dbReference type="InterPro" id="IPR011837">
    <property type="entry name" value="Glycogen_debranch_GlgX"/>
</dbReference>
<dbReference type="InterPro" id="IPR017853">
    <property type="entry name" value="Glycoside_hydrolase_SF"/>
</dbReference>
<dbReference type="InterPro" id="IPR013783">
    <property type="entry name" value="Ig-like_fold"/>
</dbReference>
<dbReference type="InterPro" id="IPR014756">
    <property type="entry name" value="Ig_E-set"/>
</dbReference>
<dbReference type="NCBIfam" id="TIGR02100">
    <property type="entry name" value="glgX_debranch"/>
    <property type="match status" value="1"/>
</dbReference>
<dbReference type="NCBIfam" id="NF002983">
    <property type="entry name" value="PRK03705.1"/>
    <property type="match status" value="1"/>
</dbReference>
<dbReference type="PANTHER" id="PTHR43002">
    <property type="entry name" value="GLYCOGEN DEBRANCHING ENZYME"/>
    <property type="match status" value="1"/>
</dbReference>
<dbReference type="Pfam" id="PF00128">
    <property type="entry name" value="Alpha-amylase"/>
    <property type="match status" value="1"/>
</dbReference>
<dbReference type="Pfam" id="PF02922">
    <property type="entry name" value="CBM_48"/>
    <property type="match status" value="1"/>
</dbReference>
<dbReference type="Pfam" id="PF18390">
    <property type="entry name" value="GlgX_C"/>
    <property type="match status" value="1"/>
</dbReference>
<dbReference type="SMART" id="SM00642">
    <property type="entry name" value="Aamy"/>
    <property type="match status" value="1"/>
</dbReference>
<dbReference type="SUPFAM" id="SSF51445">
    <property type="entry name" value="(Trans)glycosidases"/>
    <property type="match status" value="1"/>
</dbReference>
<dbReference type="SUPFAM" id="SSF81296">
    <property type="entry name" value="E set domains"/>
    <property type="match status" value="1"/>
</dbReference>
<sequence>MTQLAIGEATPHGATYDGHGVNFTLFSAHAERVELCVFDSRGNERRYDLPGRRGDVWHGYLAGARPGLRYGYRVHGPWQPAQGHRFNPVKLLLDPYARRVEGELKDHPLLHGGHDEPDYRDNAAVAPKSVVISDHYDWEDDAAPRTPWGKTVIYEAHVKGLTYLHPELPQEIRGTYKALGHPVMVAYFKQLGITALELLPVAQFASEPRLQRMGLTNYWGYNPMAMFALHPAWASSPEMALDEFRDAVKALHRAGIEVILDIVLNHSAELDLDGPTFSLRGIDNRSYYWIRDDGDYHNWTGCGNTLNLSHPGVVEYACECLRYWVETCHVDGFRFDLASVMGRTPTFRQDAPLFAAIKACPVLSTVKLIAEPWDIGEGGYQVGNFPPPFAEWNDHFRDAARRFWLPRNLTTGEFACRFAASSDVFKRNGRAPGASVNLLTAHDGFTLRDCVCFNQKHNEANGEENRDGTNSNYSDNHGKEGLGGPLDLMERRRDSIHALLATLLLSQGTPMLLAGDEHGHSQHGNNNAYCQDNALTWLDWQQANRGLTTFTAALIRLRQQIPALTGNSWWEEGDGNVRWLNKNAQPLSADEWQNGPKLMQILLSDRFLIAINATLEVTDIVLPEGEWRAVPPFAGEDNPVITAVWQGPAHGLCVFQRG</sequence>
<name>GLGX_SALEP</name>
<keyword id="KW-0119">Carbohydrate metabolism</keyword>
<keyword id="KW-0321">Glycogen metabolism</keyword>
<keyword id="KW-0326">Glycosidase</keyword>
<keyword id="KW-0378">Hydrolase</keyword>
<accession>B5R396</accession>
<gene>
    <name evidence="1" type="primary">glgX</name>
    <name type="ordered locus">SEN3361</name>
</gene>
<evidence type="ECO:0000255" key="1">
    <source>
        <dbReference type="HAMAP-Rule" id="MF_01248"/>
    </source>
</evidence>
<evidence type="ECO:0000256" key="2">
    <source>
        <dbReference type="SAM" id="MobiDB-lite"/>
    </source>
</evidence>
<reference key="1">
    <citation type="journal article" date="2008" name="Genome Res.">
        <title>Comparative genome analysis of Salmonella enteritidis PT4 and Salmonella gallinarum 287/91 provides insights into evolutionary and host adaptation pathways.</title>
        <authorList>
            <person name="Thomson N.R."/>
            <person name="Clayton D.J."/>
            <person name="Windhorst D."/>
            <person name="Vernikos G."/>
            <person name="Davidson S."/>
            <person name="Churcher C."/>
            <person name="Quail M.A."/>
            <person name="Stevens M."/>
            <person name="Jones M.A."/>
            <person name="Watson M."/>
            <person name="Barron A."/>
            <person name="Layton A."/>
            <person name="Pickard D."/>
            <person name="Kingsley R.A."/>
            <person name="Bignell A."/>
            <person name="Clark L."/>
            <person name="Harris B."/>
            <person name="Ormond D."/>
            <person name="Abdellah Z."/>
            <person name="Brooks K."/>
            <person name="Cherevach I."/>
            <person name="Chillingworth T."/>
            <person name="Woodward J."/>
            <person name="Norberczak H."/>
            <person name="Lord A."/>
            <person name="Arrowsmith C."/>
            <person name="Jagels K."/>
            <person name="Moule S."/>
            <person name="Mungall K."/>
            <person name="Saunders M."/>
            <person name="Whitehead S."/>
            <person name="Chabalgoity J.A."/>
            <person name="Maskell D."/>
            <person name="Humphreys T."/>
            <person name="Roberts M."/>
            <person name="Barrow P.A."/>
            <person name="Dougan G."/>
            <person name="Parkhill J."/>
        </authorList>
    </citation>
    <scope>NUCLEOTIDE SEQUENCE [LARGE SCALE GENOMIC DNA]</scope>
    <source>
        <strain>P125109</strain>
    </source>
</reference>